<organism>
    <name type="scientific">Campylobacter jejuni subsp. doylei (strain ATCC BAA-1458 / RM4099 / 269.97)</name>
    <dbReference type="NCBI Taxonomy" id="360109"/>
    <lineage>
        <taxon>Bacteria</taxon>
        <taxon>Pseudomonadati</taxon>
        <taxon>Campylobacterota</taxon>
        <taxon>Epsilonproteobacteria</taxon>
        <taxon>Campylobacterales</taxon>
        <taxon>Campylobacteraceae</taxon>
        <taxon>Campylobacter</taxon>
    </lineage>
</organism>
<keyword id="KW-0963">Cytoplasm</keyword>
<keyword id="KW-0460">Magnesium</keyword>
<keyword id="KW-0479">Metal-binding</keyword>
<keyword id="KW-0566">Pantothenate biosynthesis</keyword>
<keyword id="KW-0808">Transferase</keyword>
<comment type="function">
    <text evidence="1">Catalyzes the reversible reaction in which hydroxymethyl group from 5,10-methylenetetrahydrofolate is transferred onto alpha-ketoisovalerate to form ketopantoate.</text>
</comment>
<comment type="catalytic activity">
    <reaction evidence="1">
        <text>3-methyl-2-oxobutanoate + (6R)-5,10-methylene-5,6,7,8-tetrahydrofolate + H2O = 2-dehydropantoate + (6S)-5,6,7,8-tetrahydrofolate</text>
        <dbReference type="Rhea" id="RHEA:11824"/>
        <dbReference type="ChEBI" id="CHEBI:11561"/>
        <dbReference type="ChEBI" id="CHEBI:11851"/>
        <dbReference type="ChEBI" id="CHEBI:15377"/>
        <dbReference type="ChEBI" id="CHEBI:15636"/>
        <dbReference type="ChEBI" id="CHEBI:57453"/>
        <dbReference type="EC" id="2.1.2.11"/>
    </reaction>
</comment>
<comment type="cofactor">
    <cofactor evidence="1">
        <name>Mg(2+)</name>
        <dbReference type="ChEBI" id="CHEBI:18420"/>
    </cofactor>
    <text evidence="1">Binds 1 Mg(2+) ion per subunit.</text>
</comment>
<comment type="pathway">
    <text evidence="1">Cofactor biosynthesis; (R)-pantothenate biosynthesis; (R)-pantoate from 3-methyl-2-oxobutanoate: step 1/2.</text>
</comment>
<comment type="subunit">
    <text evidence="1">Homodecamer; pentamer of dimers.</text>
</comment>
<comment type="subcellular location">
    <subcellularLocation>
        <location evidence="1">Cytoplasm</location>
    </subcellularLocation>
</comment>
<comment type="similarity">
    <text evidence="1">Belongs to the PanB family.</text>
</comment>
<evidence type="ECO:0000255" key="1">
    <source>
        <dbReference type="HAMAP-Rule" id="MF_00156"/>
    </source>
</evidence>
<name>PANB_CAMJD</name>
<sequence>MRKSILSFLEKKGKNEKITMVSAYDYHSAKILDNCDIDIILVGDSLAMIVLGMQDTLSVTMDEMLIFTKAVSRGAKKSFVLADMPFMSYQGSDRDAILNASRFIKESHANGVKVEGGIEIASKIKLISQSGIPVVAHLGLTPQAVNILGGYRIQGKDLQSAQKIIDDAKAVQDSGACMLVLECVPIKLAQKISSILEIPTIGIGSGKYCDGQVLVYHDLLGLNKDFKAKFVKHFDKIDPQIGVEKYRDEVKSGIFPSEEHSFDYLGEELLDKLY</sequence>
<proteinExistence type="inferred from homology"/>
<dbReference type="EC" id="2.1.2.11" evidence="1"/>
<dbReference type="EMBL" id="CP000768">
    <property type="protein sequence ID" value="ABS44785.1"/>
    <property type="molecule type" value="Genomic_DNA"/>
</dbReference>
<dbReference type="SMR" id="A7H574"/>
<dbReference type="KEGG" id="cjd:JJD26997_1666"/>
<dbReference type="HOGENOM" id="CLU_036645_1_0_7"/>
<dbReference type="UniPathway" id="UPA00028">
    <property type="reaction ID" value="UER00003"/>
</dbReference>
<dbReference type="Proteomes" id="UP000002302">
    <property type="component" value="Chromosome"/>
</dbReference>
<dbReference type="GO" id="GO:0005737">
    <property type="term" value="C:cytoplasm"/>
    <property type="evidence" value="ECO:0007669"/>
    <property type="project" value="UniProtKB-SubCell"/>
</dbReference>
<dbReference type="GO" id="GO:0003864">
    <property type="term" value="F:3-methyl-2-oxobutanoate hydroxymethyltransferase activity"/>
    <property type="evidence" value="ECO:0007669"/>
    <property type="project" value="UniProtKB-UniRule"/>
</dbReference>
<dbReference type="GO" id="GO:0000287">
    <property type="term" value="F:magnesium ion binding"/>
    <property type="evidence" value="ECO:0007669"/>
    <property type="project" value="TreeGrafter"/>
</dbReference>
<dbReference type="GO" id="GO:0015940">
    <property type="term" value="P:pantothenate biosynthetic process"/>
    <property type="evidence" value="ECO:0007669"/>
    <property type="project" value="UniProtKB-UniRule"/>
</dbReference>
<dbReference type="CDD" id="cd06557">
    <property type="entry name" value="KPHMT-like"/>
    <property type="match status" value="1"/>
</dbReference>
<dbReference type="FunFam" id="3.20.20.60:FF:000003">
    <property type="entry name" value="3-methyl-2-oxobutanoate hydroxymethyltransferase"/>
    <property type="match status" value="1"/>
</dbReference>
<dbReference type="Gene3D" id="3.20.20.60">
    <property type="entry name" value="Phosphoenolpyruvate-binding domains"/>
    <property type="match status" value="1"/>
</dbReference>
<dbReference type="HAMAP" id="MF_00156">
    <property type="entry name" value="PanB"/>
    <property type="match status" value="1"/>
</dbReference>
<dbReference type="InterPro" id="IPR003700">
    <property type="entry name" value="Pantoate_hydroxy_MeTrfase"/>
</dbReference>
<dbReference type="InterPro" id="IPR015813">
    <property type="entry name" value="Pyrv/PenolPyrv_kinase-like_dom"/>
</dbReference>
<dbReference type="InterPro" id="IPR040442">
    <property type="entry name" value="Pyrv_kinase-like_dom_sf"/>
</dbReference>
<dbReference type="NCBIfam" id="TIGR00222">
    <property type="entry name" value="panB"/>
    <property type="match status" value="1"/>
</dbReference>
<dbReference type="NCBIfam" id="NF001452">
    <property type="entry name" value="PRK00311.1"/>
    <property type="match status" value="1"/>
</dbReference>
<dbReference type="PANTHER" id="PTHR20881">
    <property type="entry name" value="3-METHYL-2-OXOBUTANOATE HYDROXYMETHYLTRANSFERASE"/>
    <property type="match status" value="1"/>
</dbReference>
<dbReference type="PANTHER" id="PTHR20881:SF0">
    <property type="entry name" value="3-METHYL-2-OXOBUTANOATE HYDROXYMETHYLTRANSFERASE"/>
    <property type="match status" value="1"/>
</dbReference>
<dbReference type="Pfam" id="PF02548">
    <property type="entry name" value="Pantoate_transf"/>
    <property type="match status" value="1"/>
</dbReference>
<dbReference type="PIRSF" id="PIRSF000388">
    <property type="entry name" value="Pantoate_hydroxy_MeTrfase"/>
    <property type="match status" value="1"/>
</dbReference>
<dbReference type="SUPFAM" id="SSF51621">
    <property type="entry name" value="Phosphoenolpyruvate/pyruvate domain"/>
    <property type="match status" value="1"/>
</dbReference>
<reference key="1">
    <citation type="submission" date="2007-07" db="EMBL/GenBank/DDBJ databases">
        <title>Complete genome sequence of Campylobacter jejuni subsp doylei 269.97 isolated from human blood.</title>
        <authorList>
            <person name="Fouts D.E."/>
            <person name="Mongodin E.F."/>
            <person name="Puiu D."/>
            <person name="Sebastian Y."/>
            <person name="Miller W.G."/>
            <person name="Mandrell R.E."/>
            <person name="Lastovica A.J."/>
            <person name="Nelson K.E."/>
        </authorList>
    </citation>
    <scope>NUCLEOTIDE SEQUENCE [LARGE SCALE GENOMIC DNA]</scope>
    <source>
        <strain>ATCC BAA-1458 / RM4099 / 269.97</strain>
    </source>
</reference>
<protein>
    <recommendedName>
        <fullName evidence="1">3-methyl-2-oxobutanoate hydroxymethyltransferase</fullName>
        <ecNumber evidence="1">2.1.2.11</ecNumber>
    </recommendedName>
    <alternativeName>
        <fullName evidence="1">Ketopantoate hydroxymethyltransferase</fullName>
        <shortName evidence="1">KPHMT</shortName>
    </alternativeName>
</protein>
<gene>
    <name evidence="1" type="primary">panB</name>
    <name type="ordered locus">JJD26997_1666</name>
</gene>
<feature type="chain" id="PRO_1000011368" description="3-methyl-2-oxobutanoate hydroxymethyltransferase">
    <location>
        <begin position="1"/>
        <end position="274"/>
    </location>
</feature>
<feature type="active site" description="Proton acceptor" evidence="1">
    <location>
        <position position="182"/>
    </location>
</feature>
<feature type="binding site" evidence="1">
    <location>
        <begin position="44"/>
        <end position="45"/>
    </location>
    <ligand>
        <name>3-methyl-2-oxobutanoate</name>
        <dbReference type="ChEBI" id="CHEBI:11851"/>
    </ligand>
</feature>
<feature type="binding site" evidence="1">
    <location>
        <position position="44"/>
    </location>
    <ligand>
        <name>Mg(2+)</name>
        <dbReference type="ChEBI" id="CHEBI:18420"/>
    </ligand>
</feature>
<feature type="binding site" evidence="1">
    <location>
        <position position="83"/>
    </location>
    <ligand>
        <name>3-methyl-2-oxobutanoate</name>
        <dbReference type="ChEBI" id="CHEBI:11851"/>
    </ligand>
</feature>
<feature type="binding site" evidence="1">
    <location>
        <position position="83"/>
    </location>
    <ligand>
        <name>Mg(2+)</name>
        <dbReference type="ChEBI" id="CHEBI:18420"/>
    </ligand>
</feature>
<feature type="binding site" evidence="1">
    <location>
        <position position="113"/>
    </location>
    <ligand>
        <name>3-methyl-2-oxobutanoate</name>
        <dbReference type="ChEBI" id="CHEBI:11851"/>
    </ligand>
</feature>
<feature type="binding site" evidence="1">
    <location>
        <position position="115"/>
    </location>
    <ligand>
        <name>Mg(2+)</name>
        <dbReference type="ChEBI" id="CHEBI:18420"/>
    </ligand>
</feature>
<accession>A7H574</accession>